<keyword id="KW-0010">Activator</keyword>
<keyword id="KW-0238">DNA-binding</keyword>
<keyword id="KW-1185">Reference proteome</keyword>
<keyword id="KW-0804">Transcription</keyword>
<keyword id="KW-0805">Transcription regulation</keyword>
<name>BSDA_BACSU</name>
<sequence>MDIRQLRYFITIAQEQKITSAAKKLHMAQPPLSRQLKQLEDELGVVLFDRNKKKQMTLTYEGAVFLKRAKEILHRFEDAVIEVQELKEEVAGTLAVGSTIYCAALMLEKVTQIKERYPHLTFNIWENEPATLLELLESRQIDAAVTTTLIKSDTVQFKQLDDIPCVLVLSDEAGYPCGDTIKMVDIPSFPLILLRPVNGKGVYNQVMNEFHRLNLEPRIVCECHDSATLLSLVSSGFGASILPVTMIPVHMRNHVHTVHIENNPFIMTPAVMWRTDSYLPKPAQQFLDLF</sequence>
<reference key="1">
    <citation type="journal article" date="1996" name="Microbiology">
        <title>The 25 degrees-36 degrees region of the Bacillus subtilis chromosome: determination of the sequence of a 146 kb segment and identification of 113 genes.</title>
        <authorList>
            <person name="Yamane K."/>
            <person name="Kumano M."/>
            <person name="Kurita K."/>
        </authorList>
    </citation>
    <scope>NUCLEOTIDE SEQUENCE [GENOMIC DNA]</scope>
    <source>
        <strain>168</strain>
    </source>
</reference>
<reference key="2">
    <citation type="journal article" date="1997" name="Nature">
        <title>The complete genome sequence of the Gram-positive bacterium Bacillus subtilis.</title>
        <authorList>
            <person name="Kunst F."/>
            <person name="Ogasawara N."/>
            <person name="Moszer I."/>
            <person name="Albertini A.M."/>
            <person name="Alloni G."/>
            <person name="Azevedo V."/>
            <person name="Bertero M.G."/>
            <person name="Bessieres P."/>
            <person name="Bolotin A."/>
            <person name="Borchert S."/>
            <person name="Borriss R."/>
            <person name="Boursier L."/>
            <person name="Brans A."/>
            <person name="Braun M."/>
            <person name="Brignell S.C."/>
            <person name="Bron S."/>
            <person name="Brouillet S."/>
            <person name="Bruschi C.V."/>
            <person name="Caldwell B."/>
            <person name="Capuano V."/>
            <person name="Carter N.M."/>
            <person name="Choi S.-K."/>
            <person name="Codani J.-J."/>
            <person name="Connerton I.F."/>
            <person name="Cummings N.J."/>
            <person name="Daniel R.A."/>
            <person name="Denizot F."/>
            <person name="Devine K.M."/>
            <person name="Duesterhoeft A."/>
            <person name="Ehrlich S.D."/>
            <person name="Emmerson P.T."/>
            <person name="Entian K.-D."/>
            <person name="Errington J."/>
            <person name="Fabret C."/>
            <person name="Ferrari E."/>
            <person name="Foulger D."/>
            <person name="Fritz C."/>
            <person name="Fujita M."/>
            <person name="Fujita Y."/>
            <person name="Fuma S."/>
            <person name="Galizzi A."/>
            <person name="Galleron N."/>
            <person name="Ghim S.-Y."/>
            <person name="Glaser P."/>
            <person name="Goffeau A."/>
            <person name="Golightly E.J."/>
            <person name="Grandi G."/>
            <person name="Guiseppi G."/>
            <person name="Guy B.J."/>
            <person name="Haga K."/>
            <person name="Haiech J."/>
            <person name="Harwood C.R."/>
            <person name="Henaut A."/>
            <person name="Hilbert H."/>
            <person name="Holsappel S."/>
            <person name="Hosono S."/>
            <person name="Hullo M.-F."/>
            <person name="Itaya M."/>
            <person name="Jones L.-M."/>
            <person name="Joris B."/>
            <person name="Karamata D."/>
            <person name="Kasahara Y."/>
            <person name="Klaerr-Blanchard M."/>
            <person name="Klein C."/>
            <person name="Kobayashi Y."/>
            <person name="Koetter P."/>
            <person name="Koningstein G."/>
            <person name="Krogh S."/>
            <person name="Kumano M."/>
            <person name="Kurita K."/>
            <person name="Lapidus A."/>
            <person name="Lardinois S."/>
            <person name="Lauber J."/>
            <person name="Lazarevic V."/>
            <person name="Lee S.-M."/>
            <person name="Levine A."/>
            <person name="Liu H."/>
            <person name="Masuda S."/>
            <person name="Mauel C."/>
            <person name="Medigue C."/>
            <person name="Medina N."/>
            <person name="Mellado R.P."/>
            <person name="Mizuno M."/>
            <person name="Moestl D."/>
            <person name="Nakai S."/>
            <person name="Noback M."/>
            <person name="Noone D."/>
            <person name="O'Reilly M."/>
            <person name="Ogawa K."/>
            <person name="Ogiwara A."/>
            <person name="Oudega B."/>
            <person name="Park S.-H."/>
            <person name="Parro V."/>
            <person name="Pohl T.M."/>
            <person name="Portetelle D."/>
            <person name="Porwollik S."/>
            <person name="Prescott A.M."/>
            <person name="Presecan E."/>
            <person name="Pujic P."/>
            <person name="Purnelle B."/>
            <person name="Rapoport G."/>
            <person name="Rey M."/>
            <person name="Reynolds S."/>
            <person name="Rieger M."/>
            <person name="Rivolta C."/>
            <person name="Rocha E."/>
            <person name="Roche B."/>
            <person name="Rose M."/>
            <person name="Sadaie Y."/>
            <person name="Sato T."/>
            <person name="Scanlan E."/>
            <person name="Schleich S."/>
            <person name="Schroeter R."/>
            <person name="Scoffone F."/>
            <person name="Sekiguchi J."/>
            <person name="Sekowska A."/>
            <person name="Seror S.J."/>
            <person name="Serror P."/>
            <person name="Shin B.-S."/>
            <person name="Soldo B."/>
            <person name="Sorokin A."/>
            <person name="Tacconi E."/>
            <person name="Takagi T."/>
            <person name="Takahashi H."/>
            <person name="Takemaru K."/>
            <person name="Takeuchi M."/>
            <person name="Tamakoshi A."/>
            <person name="Tanaka T."/>
            <person name="Terpstra P."/>
            <person name="Tognoni A."/>
            <person name="Tosato V."/>
            <person name="Uchiyama S."/>
            <person name="Vandenbol M."/>
            <person name="Vannier F."/>
            <person name="Vassarotti A."/>
            <person name="Viari A."/>
            <person name="Wambutt R."/>
            <person name="Wedler E."/>
            <person name="Wedler H."/>
            <person name="Weitzenegger T."/>
            <person name="Winters P."/>
            <person name="Wipat A."/>
            <person name="Yamamoto H."/>
            <person name="Yamane K."/>
            <person name="Yasumoto K."/>
            <person name="Yata K."/>
            <person name="Yoshida K."/>
            <person name="Yoshikawa H.-F."/>
            <person name="Zumstein E."/>
            <person name="Yoshikawa H."/>
            <person name="Danchin A."/>
        </authorList>
    </citation>
    <scope>NUCLEOTIDE SEQUENCE [LARGE SCALE GENOMIC DNA]</scope>
    <source>
        <strain>168</strain>
    </source>
</reference>
<reference key="3">
    <citation type="journal article" date="2007" name="Proteomics">
        <title>The proteome and transcriptome analysis of Bacillus subtilis in response to salicylic acid.</title>
        <authorList>
            <person name="Duy N.V."/>
            <person name="Maeder U."/>
            <person name="Tran N.P."/>
            <person name="Cavin J.-F."/>
            <person name="Tam le T."/>
            <person name="Albrecht D."/>
            <person name="Hecker M."/>
            <person name="Antelmann H."/>
        </authorList>
    </citation>
    <scope>FUNCTION</scope>
    <scope>NOMENCLATURE</scope>
</reference>
<accession>P94403</accession>
<accession>Q797P8</accession>
<gene>
    <name type="primary">bsdA</name>
    <name type="synonym">yclA</name>
    <name type="ordered locus">BSU03620</name>
</gene>
<evidence type="ECO:0000255" key="1">
    <source>
        <dbReference type="PROSITE-ProRule" id="PRU00253"/>
    </source>
</evidence>
<evidence type="ECO:0000269" key="2">
    <source>
    </source>
</evidence>
<evidence type="ECO:0000305" key="3"/>
<proteinExistence type="inferred from homology"/>
<feature type="chain" id="PRO_0000359956" description="HTH-type transcriptional regulator BsdA">
    <location>
        <begin position="1"/>
        <end position="290"/>
    </location>
</feature>
<feature type="domain" description="HTH lysR-type" evidence="1">
    <location>
        <begin position="1"/>
        <end position="59"/>
    </location>
</feature>
<feature type="DNA-binding region" description="H-T-H motif" evidence="1">
    <location>
        <begin position="18"/>
        <end position="37"/>
    </location>
</feature>
<dbReference type="EMBL" id="D50453">
    <property type="protein sequence ID" value="BAA08995.1"/>
    <property type="molecule type" value="Genomic_DNA"/>
</dbReference>
<dbReference type="EMBL" id="AL009126">
    <property type="protein sequence ID" value="CAB12156.1"/>
    <property type="molecule type" value="Genomic_DNA"/>
</dbReference>
<dbReference type="PIR" id="F69761">
    <property type="entry name" value="F69761"/>
</dbReference>
<dbReference type="RefSeq" id="NP_388244.1">
    <property type="nucleotide sequence ID" value="NC_000964.3"/>
</dbReference>
<dbReference type="RefSeq" id="WP_003246552.1">
    <property type="nucleotide sequence ID" value="NZ_OZ025638.1"/>
</dbReference>
<dbReference type="SMR" id="P94403"/>
<dbReference type="FunCoup" id="P94403">
    <property type="interactions" value="61"/>
</dbReference>
<dbReference type="STRING" id="224308.BSU03620"/>
<dbReference type="PaxDb" id="224308-BSU03620"/>
<dbReference type="DNASU" id="938299"/>
<dbReference type="EnsemblBacteria" id="CAB12156">
    <property type="protein sequence ID" value="CAB12156"/>
    <property type="gene ID" value="BSU_03620"/>
</dbReference>
<dbReference type="GeneID" id="938299"/>
<dbReference type="KEGG" id="bsu:BSU03620"/>
<dbReference type="PATRIC" id="fig|224308.179.peg.381"/>
<dbReference type="eggNOG" id="COG0583">
    <property type="taxonomic scope" value="Bacteria"/>
</dbReference>
<dbReference type="InParanoid" id="P94403"/>
<dbReference type="OrthoDB" id="9803735at2"/>
<dbReference type="PhylomeDB" id="P94403"/>
<dbReference type="BioCyc" id="BSUB:BSU03620-MONOMER"/>
<dbReference type="Proteomes" id="UP000001570">
    <property type="component" value="Chromosome"/>
</dbReference>
<dbReference type="GO" id="GO:0005829">
    <property type="term" value="C:cytosol"/>
    <property type="evidence" value="ECO:0000318"/>
    <property type="project" value="GO_Central"/>
</dbReference>
<dbReference type="GO" id="GO:0003700">
    <property type="term" value="F:DNA-binding transcription factor activity"/>
    <property type="evidence" value="ECO:0007669"/>
    <property type="project" value="InterPro"/>
</dbReference>
<dbReference type="GO" id="GO:0043565">
    <property type="term" value="F:sequence-specific DNA binding"/>
    <property type="evidence" value="ECO:0000318"/>
    <property type="project" value="GO_Central"/>
</dbReference>
<dbReference type="GO" id="GO:0006355">
    <property type="term" value="P:regulation of DNA-templated transcription"/>
    <property type="evidence" value="ECO:0000318"/>
    <property type="project" value="GO_Central"/>
</dbReference>
<dbReference type="CDD" id="cd05466">
    <property type="entry name" value="PBP2_LTTR_substrate"/>
    <property type="match status" value="1"/>
</dbReference>
<dbReference type="FunFam" id="1.10.10.10:FF:000001">
    <property type="entry name" value="LysR family transcriptional regulator"/>
    <property type="match status" value="1"/>
</dbReference>
<dbReference type="Gene3D" id="3.40.190.290">
    <property type="match status" value="1"/>
</dbReference>
<dbReference type="Gene3D" id="1.10.10.10">
    <property type="entry name" value="Winged helix-like DNA-binding domain superfamily/Winged helix DNA-binding domain"/>
    <property type="match status" value="1"/>
</dbReference>
<dbReference type="InterPro" id="IPR050950">
    <property type="entry name" value="HTH-type_LysR_regulators"/>
</dbReference>
<dbReference type="InterPro" id="IPR005119">
    <property type="entry name" value="LysR_subst-bd"/>
</dbReference>
<dbReference type="InterPro" id="IPR000847">
    <property type="entry name" value="Tscrpt_reg_HTH_LysR"/>
</dbReference>
<dbReference type="InterPro" id="IPR036388">
    <property type="entry name" value="WH-like_DNA-bd_sf"/>
</dbReference>
<dbReference type="InterPro" id="IPR036390">
    <property type="entry name" value="WH_DNA-bd_sf"/>
</dbReference>
<dbReference type="PANTHER" id="PTHR30419:SF28">
    <property type="entry name" value="HTH-TYPE TRANSCRIPTIONAL REGULATOR BSDA"/>
    <property type="match status" value="1"/>
</dbReference>
<dbReference type="PANTHER" id="PTHR30419">
    <property type="entry name" value="HTH-TYPE TRANSCRIPTIONAL REGULATOR YBHD"/>
    <property type="match status" value="1"/>
</dbReference>
<dbReference type="Pfam" id="PF00126">
    <property type="entry name" value="HTH_1"/>
    <property type="match status" value="1"/>
</dbReference>
<dbReference type="Pfam" id="PF03466">
    <property type="entry name" value="LysR_substrate"/>
    <property type="match status" value="1"/>
</dbReference>
<dbReference type="PRINTS" id="PR00039">
    <property type="entry name" value="HTHLYSR"/>
</dbReference>
<dbReference type="SUPFAM" id="SSF53850">
    <property type="entry name" value="Periplasmic binding protein-like II"/>
    <property type="match status" value="1"/>
</dbReference>
<dbReference type="SUPFAM" id="SSF46785">
    <property type="entry name" value="Winged helix' DNA-binding domain"/>
    <property type="match status" value="1"/>
</dbReference>
<dbReference type="PROSITE" id="PS50931">
    <property type="entry name" value="HTH_LYSR"/>
    <property type="match status" value="1"/>
</dbReference>
<protein>
    <recommendedName>
        <fullName>HTH-type transcriptional regulator BsdA</fullName>
    </recommendedName>
    <alternativeName>
        <fullName>Bsd operon regulatory protein</fullName>
    </alternativeName>
</protein>
<organism>
    <name type="scientific">Bacillus subtilis (strain 168)</name>
    <dbReference type="NCBI Taxonomy" id="224308"/>
    <lineage>
        <taxon>Bacteria</taxon>
        <taxon>Bacillati</taxon>
        <taxon>Bacillota</taxon>
        <taxon>Bacilli</taxon>
        <taxon>Bacillales</taxon>
        <taxon>Bacillaceae</taxon>
        <taxon>Bacillus</taxon>
    </lineage>
</organism>
<comment type="function">
    <text evidence="2">Could be a positive regulator of bsdBCD expression in response to salicylic acid.</text>
</comment>
<comment type="similarity">
    <text evidence="3">Belongs to the LysR transcriptional regulatory family.</text>
</comment>